<accession>Q6GP95</accession>
<dbReference type="EC" id="2.7.1.30" evidence="2"/>
<dbReference type="EMBL" id="BC073246">
    <property type="protein sequence ID" value="AAH73246.1"/>
    <property type="molecule type" value="mRNA"/>
</dbReference>
<dbReference type="RefSeq" id="NP_001085720.1">
    <property type="nucleotide sequence ID" value="NM_001092251.1"/>
</dbReference>
<dbReference type="SMR" id="Q6GP95"/>
<dbReference type="DNASU" id="444147"/>
<dbReference type="GeneID" id="444147"/>
<dbReference type="KEGG" id="xla:444147"/>
<dbReference type="AGR" id="Xenbase:XB-GENE-983232"/>
<dbReference type="CTD" id="444147"/>
<dbReference type="Xenbase" id="XB-GENE-983232">
    <property type="gene designation" value="gk5.L"/>
</dbReference>
<dbReference type="OrthoDB" id="6278781at2759"/>
<dbReference type="UniPathway" id="UPA00618">
    <property type="reaction ID" value="UER00672"/>
</dbReference>
<dbReference type="Proteomes" id="UP000186698">
    <property type="component" value="Chromosome 5L"/>
</dbReference>
<dbReference type="Bgee" id="444147">
    <property type="expression patterns" value="Expressed in egg cell and 19 other cell types or tissues"/>
</dbReference>
<dbReference type="GO" id="GO:0005737">
    <property type="term" value="C:cytoplasm"/>
    <property type="evidence" value="ECO:0000250"/>
    <property type="project" value="UniProtKB"/>
</dbReference>
<dbReference type="GO" id="GO:0005739">
    <property type="term" value="C:mitochondrion"/>
    <property type="evidence" value="ECO:0000318"/>
    <property type="project" value="GO_Central"/>
</dbReference>
<dbReference type="GO" id="GO:0005524">
    <property type="term" value="F:ATP binding"/>
    <property type="evidence" value="ECO:0007669"/>
    <property type="project" value="UniProtKB-KW"/>
</dbReference>
<dbReference type="GO" id="GO:0004370">
    <property type="term" value="F:glycerol kinase activity"/>
    <property type="evidence" value="ECO:0000250"/>
    <property type="project" value="UniProtKB"/>
</dbReference>
<dbReference type="GO" id="GO:0019563">
    <property type="term" value="P:glycerol catabolic process"/>
    <property type="evidence" value="ECO:0007669"/>
    <property type="project" value="UniProtKB-UniPathway"/>
</dbReference>
<dbReference type="GO" id="GO:0006071">
    <property type="term" value="P:glycerol metabolic process"/>
    <property type="evidence" value="ECO:0000318"/>
    <property type="project" value="GO_Central"/>
</dbReference>
<dbReference type="GO" id="GO:0046167">
    <property type="term" value="P:glycerol-3-phosphate biosynthetic process"/>
    <property type="evidence" value="ECO:0000250"/>
    <property type="project" value="UniProtKB"/>
</dbReference>
<dbReference type="GO" id="GO:0006641">
    <property type="term" value="P:triglyceride metabolic process"/>
    <property type="evidence" value="ECO:0000318"/>
    <property type="project" value="GO_Central"/>
</dbReference>
<dbReference type="CDD" id="cd07793">
    <property type="entry name" value="ASKHA_NBD_FGGY_GK5-like"/>
    <property type="match status" value="1"/>
</dbReference>
<dbReference type="FunFam" id="3.30.420.40:FF:000102">
    <property type="entry name" value="Putative glycerol kinase 5"/>
    <property type="match status" value="1"/>
</dbReference>
<dbReference type="FunFam" id="3.30.420.40:FF:000104">
    <property type="entry name" value="putative glycerol kinase 5"/>
    <property type="match status" value="1"/>
</dbReference>
<dbReference type="Gene3D" id="3.30.420.40">
    <property type="match status" value="2"/>
</dbReference>
<dbReference type="InterPro" id="IPR043129">
    <property type="entry name" value="ATPase_NBD"/>
</dbReference>
<dbReference type="InterPro" id="IPR000577">
    <property type="entry name" value="Carb_kinase_FGGY"/>
</dbReference>
<dbReference type="InterPro" id="IPR018483">
    <property type="entry name" value="Carb_kinase_FGGY_CS"/>
</dbReference>
<dbReference type="InterPro" id="IPR018485">
    <property type="entry name" value="FGGY_C"/>
</dbReference>
<dbReference type="InterPro" id="IPR018484">
    <property type="entry name" value="FGGY_N"/>
</dbReference>
<dbReference type="InterPro" id="IPR037444">
    <property type="entry name" value="GK5"/>
</dbReference>
<dbReference type="PANTHER" id="PTHR10196:SF68">
    <property type="entry name" value="GLYCEROL KINASE 5-RELATED"/>
    <property type="match status" value="1"/>
</dbReference>
<dbReference type="PANTHER" id="PTHR10196">
    <property type="entry name" value="SUGAR KINASE"/>
    <property type="match status" value="1"/>
</dbReference>
<dbReference type="Pfam" id="PF02782">
    <property type="entry name" value="FGGY_C"/>
    <property type="match status" value="1"/>
</dbReference>
<dbReference type="Pfam" id="PF00370">
    <property type="entry name" value="FGGY_N"/>
    <property type="match status" value="1"/>
</dbReference>
<dbReference type="PIRSF" id="PIRSF000538">
    <property type="entry name" value="GlpK"/>
    <property type="match status" value="1"/>
</dbReference>
<dbReference type="SUPFAM" id="SSF53067">
    <property type="entry name" value="Actin-like ATPase domain"/>
    <property type="match status" value="2"/>
</dbReference>
<dbReference type="PROSITE" id="PS00445">
    <property type="entry name" value="FGGY_KINASES_2"/>
    <property type="match status" value="1"/>
</dbReference>
<keyword id="KW-0067">ATP-binding</keyword>
<keyword id="KW-0963">Cytoplasm</keyword>
<keyword id="KW-0319">Glycerol metabolism</keyword>
<keyword id="KW-0418">Kinase</keyword>
<keyword id="KW-0547">Nucleotide-binding</keyword>
<keyword id="KW-1185">Reference proteome</keyword>
<keyword id="KW-0808">Transferase</keyword>
<reference key="1">
    <citation type="submission" date="2004-06" db="EMBL/GenBank/DDBJ databases">
        <authorList>
            <consortium name="NIH - Xenopus Gene Collection (XGC) project"/>
        </authorList>
    </citation>
    <scope>NUCLEOTIDE SEQUENCE [LARGE SCALE MRNA]</scope>
    <source>
        <tissue>Spleen</tissue>
    </source>
</reference>
<feature type="chain" id="PRO_0000323758" description="Glycerol kinase 5">
    <location>
        <begin position="1"/>
        <end position="479"/>
    </location>
</feature>
<feature type="binding site" evidence="1">
    <location>
        <position position="20"/>
    </location>
    <ligand>
        <name>ATP</name>
        <dbReference type="ChEBI" id="CHEBI:30616"/>
    </ligand>
</feature>
<feature type="binding site" evidence="1">
    <location>
        <position position="21"/>
    </location>
    <ligand>
        <name>ATP</name>
        <dbReference type="ChEBI" id="CHEBI:30616"/>
    </ligand>
</feature>
<feature type="binding site" evidence="1">
    <location>
        <position position="90"/>
    </location>
    <ligand>
        <name>glycerol</name>
        <dbReference type="ChEBI" id="CHEBI:17754"/>
    </ligand>
</feature>
<feature type="binding site" evidence="1">
    <location>
        <position position="267"/>
    </location>
    <ligand>
        <name>glycerol</name>
        <dbReference type="ChEBI" id="CHEBI:17754"/>
    </ligand>
</feature>
<feature type="binding site" evidence="1">
    <location>
        <position position="268"/>
    </location>
    <ligand>
        <name>glycerol</name>
        <dbReference type="ChEBI" id="CHEBI:17754"/>
    </ligand>
</feature>
<feature type="binding site" evidence="1">
    <location>
        <position position="289"/>
    </location>
    <ligand>
        <name>ATP</name>
        <dbReference type="ChEBI" id="CHEBI:30616"/>
    </ligand>
</feature>
<feature type="binding site" evidence="1">
    <location>
        <position position="332"/>
    </location>
    <ligand>
        <name>ATP</name>
        <dbReference type="ChEBI" id="CHEBI:30616"/>
    </ligand>
</feature>
<feature type="binding site" evidence="1">
    <location>
        <position position="432"/>
    </location>
    <ligand>
        <name>ATP</name>
        <dbReference type="ChEBI" id="CHEBI:30616"/>
    </ligand>
</feature>
<organism>
    <name type="scientific">Xenopus laevis</name>
    <name type="common">African clawed frog</name>
    <dbReference type="NCBI Taxonomy" id="8355"/>
    <lineage>
        <taxon>Eukaryota</taxon>
        <taxon>Metazoa</taxon>
        <taxon>Chordata</taxon>
        <taxon>Craniata</taxon>
        <taxon>Vertebrata</taxon>
        <taxon>Euteleostomi</taxon>
        <taxon>Amphibia</taxon>
        <taxon>Batrachia</taxon>
        <taxon>Anura</taxon>
        <taxon>Pipoidea</taxon>
        <taxon>Pipidae</taxon>
        <taxon>Xenopodinae</taxon>
        <taxon>Xenopus</taxon>
        <taxon>Xenopus</taxon>
    </lineage>
</organism>
<gene>
    <name type="primary">gk5</name>
</gene>
<proteinExistence type="evidence at transcript level"/>
<evidence type="ECO:0000250" key="1">
    <source>
        <dbReference type="UniProtKB" id="P0A6F3"/>
    </source>
</evidence>
<evidence type="ECO:0000250" key="2">
    <source>
        <dbReference type="UniProtKB" id="Q8BX05"/>
    </source>
</evidence>
<evidence type="ECO:0000305" key="3"/>
<comment type="function">
    <text evidence="2">Skin-specific kinase that plays a key role in glycerol metabolism, catalyzing its phosphorylation to produce sn-glycerol 3-phosphate. Involved in skin-specific regulation of sterol regulatory element-binding protein (SREBP) processing and lipid biosynthesis.</text>
</comment>
<comment type="catalytic activity">
    <reaction evidence="2">
        <text>glycerol + ATP = sn-glycerol 3-phosphate + ADP + H(+)</text>
        <dbReference type="Rhea" id="RHEA:21644"/>
        <dbReference type="ChEBI" id="CHEBI:15378"/>
        <dbReference type="ChEBI" id="CHEBI:17754"/>
        <dbReference type="ChEBI" id="CHEBI:30616"/>
        <dbReference type="ChEBI" id="CHEBI:57597"/>
        <dbReference type="ChEBI" id="CHEBI:456216"/>
        <dbReference type="EC" id="2.7.1.30"/>
    </reaction>
</comment>
<comment type="pathway">
    <text evidence="2">Polyol metabolism; glycerol degradation via glycerol kinase pathway; sn-glycerol 3-phosphate from glycerol: step 1/1.</text>
</comment>
<comment type="subcellular location">
    <subcellularLocation>
        <location evidence="2">Cytoplasm</location>
    </subcellularLocation>
</comment>
<comment type="similarity">
    <text evidence="3">Belongs to the FGGY kinase family.</text>
</comment>
<name>GLPK5_XENLA</name>
<sequence>MSSPRNGYRDRLILAVDVGSSVLRCHLYNQSGEICGSAEDKLKVLYPQAGYVEIDPESLWEQFVRVVKEAVADAGIQMSQVAGLGISTQRGTFITWNKKTGETFHNFISWQDLRAADLVSSWNRSLLLKAVHGVCTALHFFTRRKRFLAASLINFTTQHVSLRLVWVLQNIPQVRQAAEKGNCCFGTIDTWLLHKLTKGTVFATDYSNASGTAVFDPYLMCWSSFLCSLLSIPLSIFPPVEDTSHSFGLADPTIFGAPVPILALVADQQAAMFGQCCFDVGSVKLTMGTGSFISINTGETLHTSIAGLYPLIGWKVGDEVVCLAEGNASDTGTAIKWAEELNLFTSVADTEAMARSVPDCGGIYLVPSFSGLQAPINDPYACASFMGLKPSTSKSHLVRAILESVAYRNKQLYDTVLRETTIPITLIRADGGVSNNNFIMQMTADLLGQTIDKPKHTDMSSLGAAFLAGMAVYGPLKTS</sequence>
<protein>
    <recommendedName>
        <fullName>Glycerol kinase 5</fullName>
        <shortName>GK 5</shortName>
        <shortName>Glycerokinase 5</shortName>
        <ecNumber evidence="2">2.7.1.30</ecNumber>
    </recommendedName>
    <alternativeName>
        <fullName>ATP:glycerol 3-phosphotransferase 5</fullName>
    </alternativeName>
</protein>